<sequence length="325" mass="36976">MSETASWQPSASIPNLLKRAAIMAEIRRFFADRGVLEVETPCMSQATVTDIHLVPFETRFVGPGHSQGMNLWLMTSPEYHMKRLLVAGCGPVFQLCRSFRNEEMGRYHNPEFTMLEWYRPHYDMYRLMNEVDDLLQQVLDCPAAESLSYQQAFLRYLEIDPLSADKTQLREVAAKLDLSNVADTEEDRDTLLQLLFTFGVEPNIGKEKPTFVYHFPASQASLAQISTEDHRVAERFEVYYKGIELANGFHELTDAREQQQRFEQDNRKRAARGLPQHPIDQNLIEALKVGMPDCSGVALGVDRLVMLALGAETLAEVIAFSVDRA</sequence>
<comment type="function">
    <text evidence="1">With EpmB is involved in the beta-lysylation step of the post-translational modification of translation elongation factor P (EF-P) on 'Lys-34'. Catalyzes the ATP-dependent activation of (R)-beta-lysine produced by EpmB, forming a lysyl-adenylate, from which the beta-lysyl moiety is then transferred to the epsilon-amino group of EF-P 'Lys-34'.</text>
</comment>
<comment type="catalytic activity">
    <reaction evidence="1">
        <text>D-beta-lysine + L-lysyl-[protein] + ATP = N(6)-((3R)-3,6-diaminohexanoyl)-L-lysyl-[protein] + AMP + diphosphate + H(+)</text>
        <dbReference type="Rhea" id="RHEA:83435"/>
        <dbReference type="Rhea" id="RHEA-COMP:9752"/>
        <dbReference type="Rhea" id="RHEA-COMP:20131"/>
        <dbReference type="ChEBI" id="CHEBI:15378"/>
        <dbReference type="ChEBI" id="CHEBI:29969"/>
        <dbReference type="ChEBI" id="CHEBI:30616"/>
        <dbReference type="ChEBI" id="CHEBI:33019"/>
        <dbReference type="ChEBI" id="CHEBI:84138"/>
        <dbReference type="ChEBI" id="CHEBI:156053"/>
        <dbReference type="ChEBI" id="CHEBI:456215"/>
    </reaction>
    <physiologicalReaction direction="left-to-right" evidence="1">
        <dbReference type="Rhea" id="RHEA:83436"/>
    </physiologicalReaction>
</comment>
<comment type="subunit">
    <text evidence="1">Homodimer.</text>
</comment>
<comment type="similarity">
    <text evidence="1">Belongs to the class-II aminoacyl-tRNA synthetase family. EpmA subfamily.</text>
</comment>
<accession>B7MSX2</accession>
<gene>
    <name evidence="1" type="primary">epmA</name>
    <name type="synonym">yjeA</name>
    <name type="ordered locus">ECED1_4944</name>
</gene>
<name>EPMA_ECO81</name>
<dbReference type="EC" id="6.3.2.-" evidence="1"/>
<dbReference type="EMBL" id="CU928162">
    <property type="protein sequence ID" value="CAR11047.2"/>
    <property type="molecule type" value="Genomic_DNA"/>
</dbReference>
<dbReference type="RefSeq" id="WP_000004771.1">
    <property type="nucleotide sequence ID" value="NC_011745.1"/>
</dbReference>
<dbReference type="SMR" id="B7MSX2"/>
<dbReference type="GeneID" id="93777667"/>
<dbReference type="KEGG" id="ecq:ECED1_4944"/>
<dbReference type="HOGENOM" id="CLU_008255_1_1_6"/>
<dbReference type="Proteomes" id="UP000000748">
    <property type="component" value="Chromosome"/>
</dbReference>
<dbReference type="GO" id="GO:0005829">
    <property type="term" value="C:cytosol"/>
    <property type="evidence" value="ECO:0007669"/>
    <property type="project" value="TreeGrafter"/>
</dbReference>
<dbReference type="GO" id="GO:0016880">
    <property type="term" value="F:acid-ammonia (or amide) ligase activity"/>
    <property type="evidence" value="ECO:0007669"/>
    <property type="project" value="UniProtKB-UniRule"/>
</dbReference>
<dbReference type="GO" id="GO:0005524">
    <property type="term" value="F:ATP binding"/>
    <property type="evidence" value="ECO:0007669"/>
    <property type="project" value="UniProtKB-UniRule"/>
</dbReference>
<dbReference type="GO" id="GO:0004824">
    <property type="term" value="F:lysine-tRNA ligase activity"/>
    <property type="evidence" value="ECO:0007669"/>
    <property type="project" value="InterPro"/>
</dbReference>
<dbReference type="GO" id="GO:0000049">
    <property type="term" value="F:tRNA binding"/>
    <property type="evidence" value="ECO:0007669"/>
    <property type="project" value="TreeGrafter"/>
</dbReference>
<dbReference type="GO" id="GO:0006430">
    <property type="term" value="P:lysyl-tRNA aminoacylation"/>
    <property type="evidence" value="ECO:0007669"/>
    <property type="project" value="InterPro"/>
</dbReference>
<dbReference type="FunFam" id="3.30.930.10:FF:000017">
    <property type="entry name" value="Elongation factor P--(R)-beta-lysine ligase"/>
    <property type="match status" value="1"/>
</dbReference>
<dbReference type="Gene3D" id="3.30.930.10">
    <property type="entry name" value="Bira Bifunctional Protein, Domain 2"/>
    <property type="match status" value="1"/>
</dbReference>
<dbReference type="HAMAP" id="MF_00174">
    <property type="entry name" value="EF_P_modif_A"/>
    <property type="match status" value="1"/>
</dbReference>
<dbReference type="InterPro" id="IPR004364">
    <property type="entry name" value="Aa-tRNA-synt_II"/>
</dbReference>
<dbReference type="InterPro" id="IPR006195">
    <property type="entry name" value="aa-tRNA-synth_II"/>
</dbReference>
<dbReference type="InterPro" id="IPR045864">
    <property type="entry name" value="aa-tRNA-synth_II/BPL/LPL"/>
</dbReference>
<dbReference type="InterPro" id="IPR004525">
    <property type="entry name" value="EpmA"/>
</dbReference>
<dbReference type="InterPro" id="IPR018149">
    <property type="entry name" value="Lys-tRNA-synth_II_C"/>
</dbReference>
<dbReference type="NCBIfam" id="TIGR00462">
    <property type="entry name" value="genX"/>
    <property type="match status" value="1"/>
</dbReference>
<dbReference type="NCBIfam" id="NF006828">
    <property type="entry name" value="PRK09350.1"/>
    <property type="match status" value="1"/>
</dbReference>
<dbReference type="PANTHER" id="PTHR42918:SF6">
    <property type="entry name" value="ELONGATION FACTOR P--(R)-BETA-LYSINE LIGASE"/>
    <property type="match status" value="1"/>
</dbReference>
<dbReference type="PANTHER" id="PTHR42918">
    <property type="entry name" value="LYSYL-TRNA SYNTHETASE"/>
    <property type="match status" value="1"/>
</dbReference>
<dbReference type="Pfam" id="PF00152">
    <property type="entry name" value="tRNA-synt_2"/>
    <property type="match status" value="1"/>
</dbReference>
<dbReference type="PRINTS" id="PR00982">
    <property type="entry name" value="TRNASYNTHLYS"/>
</dbReference>
<dbReference type="SUPFAM" id="SSF55681">
    <property type="entry name" value="Class II aaRS and biotin synthetases"/>
    <property type="match status" value="1"/>
</dbReference>
<dbReference type="PROSITE" id="PS50862">
    <property type="entry name" value="AA_TRNA_LIGASE_II"/>
    <property type="match status" value="1"/>
</dbReference>
<protein>
    <recommendedName>
        <fullName evidence="1">Elongation factor P--(R)-beta-lysine ligase</fullName>
        <shortName evidence="1">EF-P--(R)-beta-lysine ligase</shortName>
        <ecNumber evidence="1">6.3.2.-</ecNumber>
    </recommendedName>
    <alternativeName>
        <fullName evidence="1">EF-P post-translational modification enzyme A</fullName>
    </alternativeName>
    <alternativeName>
        <fullName evidence="1">EF-P-lysine lysyltransferase</fullName>
    </alternativeName>
</protein>
<organism>
    <name type="scientific">Escherichia coli O81 (strain ED1a)</name>
    <dbReference type="NCBI Taxonomy" id="585397"/>
    <lineage>
        <taxon>Bacteria</taxon>
        <taxon>Pseudomonadati</taxon>
        <taxon>Pseudomonadota</taxon>
        <taxon>Gammaproteobacteria</taxon>
        <taxon>Enterobacterales</taxon>
        <taxon>Enterobacteriaceae</taxon>
        <taxon>Escherichia</taxon>
    </lineage>
</organism>
<proteinExistence type="inferred from homology"/>
<feature type="chain" id="PRO_1000199261" description="Elongation factor P--(R)-beta-lysine ligase">
    <location>
        <begin position="1"/>
        <end position="325"/>
    </location>
</feature>
<feature type="binding site" evidence="1">
    <location>
        <begin position="76"/>
        <end position="78"/>
    </location>
    <ligand>
        <name>substrate</name>
    </ligand>
</feature>
<feature type="binding site" evidence="1">
    <location>
        <begin position="100"/>
        <end position="102"/>
    </location>
    <ligand>
        <name>ATP</name>
        <dbReference type="ChEBI" id="CHEBI:30616"/>
    </ligand>
</feature>
<feature type="binding site" evidence="1">
    <location>
        <position position="109"/>
    </location>
    <ligand>
        <name>ATP</name>
        <dbReference type="ChEBI" id="CHEBI:30616"/>
    </ligand>
</feature>
<feature type="binding site" evidence="1">
    <location>
        <position position="118"/>
    </location>
    <ligand>
        <name>substrate</name>
    </ligand>
</feature>
<feature type="binding site" evidence="1">
    <location>
        <begin position="244"/>
        <end position="245"/>
    </location>
    <ligand>
        <name>ATP</name>
        <dbReference type="ChEBI" id="CHEBI:30616"/>
    </ligand>
</feature>
<feature type="binding site" evidence="1">
    <location>
        <position position="251"/>
    </location>
    <ligand>
        <name>substrate</name>
    </ligand>
</feature>
<feature type="binding site" evidence="1">
    <location>
        <position position="300"/>
    </location>
    <ligand>
        <name>ATP</name>
        <dbReference type="ChEBI" id="CHEBI:30616"/>
    </ligand>
</feature>
<reference key="1">
    <citation type="journal article" date="2009" name="PLoS Genet.">
        <title>Organised genome dynamics in the Escherichia coli species results in highly diverse adaptive paths.</title>
        <authorList>
            <person name="Touchon M."/>
            <person name="Hoede C."/>
            <person name="Tenaillon O."/>
            <person name="Barbe V."/>
            <person name="Baeriswyl S."/>
            <person name="Bidet P."/>
            <person name="Bingen E."/>
            <person name="Bonacorsi S."/>
            <person name="Bouchier C."/>
            <person name="Bouvet O."/>
            <person name="Calteau A."/>
            <person name="Chiapello H."/>
            <person name="Clermont O."/>
            <person name="Cruveiller S."/>
            <person name="Danchin A."/>
            <person name="Diard M."/>
            <person name="Dossat C."/>
            <person name="Karoui M.E."/>
            <person name="Frapy E."/>
            <person name="Garry L."/>
            <person name="Ghigo J.M."/>
            <person name="Gilles A.M."/>
            <person name="Johnson J."/>
            <person name="Le Bouguenec C."/>
            <person name="Lescat M."/>
            <person name="Mangenot S."/>
            <person name="Martinez-Jehanne V."/>
            <person name="Matic I."/>
            <person name="Nassif X."/>
            <person name="Oztas S."/>
            <person name="Petit M.A."/>
            <person name="Pichon C."/>
            <person name="Rouy Z."/>
            <person name="Ruf C.S."/>
            <person name="Schneider D."/>
            <person name="Tourret J."/>
            <person name="Vacherie B."/>
            <person name="Vallenet D."/>
            <person name="Medigue C."/>
            <person name="Rocha E.P.C."/>
            <person name="Denamur E."/>
        </authorList>
    </citation>
    <scope>NUCLEOTIDE SEQUENCE [LARGE SCALE GENOMIC DNA]</scope>
    <source>
        <strain>ED1a</strain>
    </source>
</reference>
<evidence type="ECO:0000255" key="1">
    <source>
        <dbReference type="HAMAP-Rule" id="MF_00174"/>
    </source>
</evidence>
<keyword id="KW-0067">ATP-binding</keyword>
<keyword id="KW-0436">Ligase</keyword>
<keyword id="KW-0547">Nucleotide-binding</keyword>